<proteinExistence type="inferred from homology"/>
<keyword id="KW-1185">Reference proteome</keyword>
<protein>
    <recommendedName>
        <fullName evidence="1">UPF0502 protein Acid345_3645</fullName>
    </recommendedName>
</protein>
<gene>
    <name type="ordered locus">Acid345_3645</name>
</gene>
<reference key="1">
    <citation type="journal article" date="2009" name="Appl. Environ. Microbiol.">
        <title>Three genomes from the phylum Acidobacteria provide insight into the lifestyles of these microorganisms in soils.</title>
        <authorList>
            <person name="Ward N.L."/>
            <person name="Challacombe J.F."/>
            <person name="Janssen P.H."/>
            <person name="Henrissat B."/>
            <person name="Coutinho P.M."/>
            <person name="Wu M."/>
            <person name="Xie G."/>
            <person name="Haft D.H."/>
            <person name="Sait M."/>
            <person name="Badger J."/>
            <person name="Barabote R.D."/>
            <person name="Bradley B."/>
            <person name="Brettin T.S."/>
            <person name="Brinkac L.M."/>
            <person name="Bruce D."/>
            <person name="Creasy T."/>
            <person name="Daugherty S.C."/>
            <person name="Davidsen T.M."/>
            <person name="DeBoy R.T."/>
            <person name="Detter J.C."/>
            <person name="Dodson R.J."/>
            <person name="Durkin A.S."/>
            <person name="Ganapathy A."/>
            <person name="Gwinn-Giglio M."/>
            <person name="Han C.S."/>
            <person name="Khouri H."/>
            <person name="Kiss H."/>
            <person name="Kothari S.P."/>
            <person name="Madupu R."/>
            <person name="Nelson K.E."/>
            <person name="Nelson W.C."/>
            <person name="Paulsen I."/>
            <person name="Penn K."/>
            <person name="Ren Q."/>
            <person name="Rosovitz M.J."/>
            <person name="Selengut J.D."/>
            <person name="Shrivastava S."/>
            <person name="Sullivan S.A."/>
            <person name="Tapia R."/>
            <person name="Thompson L.S."/>
            <person name="Watkins K.L."/>
            <person name="Yang Q."/>
            <person name="Yu C."/>
            <person name="Zafar N."/>
            <person name="Zhou L."/>
            <person name="Kuske C.R."/>
        </authorList>
    </citation>
    <scope>NUCLEOTIDE SEQUENCE [LARGE SCALE GENOMIC DNA]</scope>
    <source>
        <strain>Ellin345</strain>
    </source>
</reference>
<dbReference type="EMBL" id="CP000360">
    <property type="protein sequence ID" value="ABF42646.1"/>
    <property type="molecule type" value="Genomic_DNA"/>
</dbReference>
<dbReference type="RefSeq" id="WP_011524445.1">
    <property type="nucleotide sequence ID" value="NC_008009.1"/>
</dbReference>
<dbReference type="SMR" id="Q1IKF4"/>
<dbReference type="STRING" id="204669.Acid345_3645"/>
<dbReference type="EnsemblBacteria" id="ABF42646">
    <property type="protein sequence ID" value="ABF42646"/>
    <property type="gene ID" value="Acid345_3645"/>
</dbReference>
<dbReference type="KEGG" id="aba:Acid345_3645"/>
<dbReference type="eggNOG" id="COG3132">
    <property type="taxonomic scope" value="Bacteria"/>
</dbReference>
<dbReference type="HOGENOM" id="CLU_057831_1_0_0"/>
<dbReference type="OrthoDB" id="9784785at2"/>
<dbReference type="Proteomes" id="UP000002432">
    <property type="component" value="Chromosome"/>
</dbReference>
<dbReference type="Gene3D" id="1.10.10.10">
    <property type="entry name" value="Winged helix-like DNA-binding domain superfamily/Winged helix DNA-binding domain"/>
    <property type="match status" value="2"/>
</dbReference>
<dbReference type="HAMAP" id="MF_01584">
    <property type="entry name" value="UPF0502"/>
    <property type="match status" value="1"/>
</dbReference>
<dbReference type="InterPro" id="IPR007432">
    <property type="entry name" value="DUF480"/>
</dbReference>
<dbReference type="InterPro" id="IPR036388">
    <property type="entry name" value="WH-like_DNA-bd_sf"/>
</dbReference>
<dbReference type="InterPro" id="IPR036390">
    <property type="entry name" value="WH_DNA-bd_sf"/>
</dbReference>
<dbReference type="PANTHER" id="PTHR38768">
    <property type="entry name" value="UPF0502 PROTEIN YCEH"/>
    <property type="match status" value="1"/>
</dbReference>
<dbReference type="PANTHER" id="PTHR38768:SF1">
    <property type="entry name" value="UPF0502 PROTEIN YCEH"/>
    <property type="match status" value="1"/>
</dbReference>
<dbReference type="Pfam" id="PF04337">
    <property type="entry name" value="DUF480"/>
    <property type="match status" value="1"/>
</dbReference>
<dbReference type="SUPFAM" id="SSF46785">
    <property type="entry name" value="Winged helix' DNA-binding domain"/>
    <property type="match status" value="2"/>
</dbReference>
<accession>Q1IKF4</accession>
<organism>
    <name type="scientific">Koribacter versatilis (strain Ellin345)</name>
    <dbReference type="NCBI Taxonomy" id="204669"/>
    <lineage>
        <taxon>Bacteria</taxon>
        <taxon>Pseudomonadati</taxon>
        <taxon>Acidobacteriota</taxon>
        <taxon>Terriglobia</taxon>
        <taxon>Terriglobales</taxon>
        <taxon>Candidatus Korobacteraceae</taxon>
        <taxon>Candidatus Korobacter</taxon>
    </lineage>
</organism>
<sequence length="214" mass="23969">MTLILNPESARVLGCLIEKEITTPEYYPLSLNALINACNQKSNRDPAMSLDEDSVRVALRNLTDKGLARHAPSEGRVPKYEHDVNNAMQLSRREVAILCELLLRGPQTPGELRGRAERMYKFEGIEDVHSTLQRLMERDPALVVVLPRQPGTKEARYTHTLMPVDMQPQPAVEVSHSVSGGNDGRIAQLEAEVRELRAEIETLKEQVKSLTPVN</sequence>
<evidence type="ECO:0000255" key="1">
    <source>
        <dbReference type="HAMAP-Rule" id="MF_01584"/>
    </source>
</evidence>
<comment type="similarity">
    <text evidence="1">Belongs to the UPF0502 family.</text>
</comment>
<feature type="chain" id="PRO_0000309365" description="UPF0502 protein Acid345_3645">
    <location>
        <begin position="1"/>
        <end position="214"/>
    </location>
</feature>
<name>Y3645_KORVE</name>